<sequence>MQVTFCRLRTHQWCFILFNVILFHALLFGTDFVEEYFLHSLPYIDVKVLEIKNKARKLNIEPLRSNLSKYYVLSQSEICKGKNIFLLSLIFSSPGNGTRRDLIRKTWGNVTSVQGHPILTLFALGMPVSVTTQKEINKESCKNNDIIEGIFLDSSENQTLKIIAMIQWAVAFCPNALFILKVDEETFVNLPSLVDYLLNLKEHLEDIYVGRVLHQVTPNRDPQNRDFVPLSEYPEKYYPDYCSGEAFIMSQDVARMMYVVFKEVPMMVPADVFVGICAKFIGLIPIHSSRFSGKRHIRYNRCCYKFIFTSSEIADPEMPLAWKEINDGKECTLFETSYELISCKLLTYLDSFKRFHMGTIKNNLMYFAD</sequence>
<reference key="1">
    <citation type="journal article" date="2004" name="Nature">
        <title>DNA sequence and analysis of human chromosome 9.</title>
        <authorList>
            <person name="Humphray S.J."/>
            <person name="Oliver K."/>
            <person name="Hunt A.R."/>
            <person name="Plumb R.W."/>
            <person name="Loveland J.E."/>
            <person name="Howe K.L."/>
            <person name="Andrews T.D."/>
            <person name="Searle S."/>
            <person name="Hunt S.E."/>
            <person name="Scott C.E."/>
            <person name="Jones M.C."/>
            <person name="Ainscough R."/>
            <person name="Almeida J.P."/>
            <person name="Ambrose K.D."/>
            <person name="Ashwell R.I.S."/>
            <person name="Babbage A.K."/>
            <person name="Babbage S."/>
            <person name="Bagguley C.L."/>
            <person name="Bailey J."/>
            <person name="Banerjee R."/>
            <person name="Barker D.J."/>
            <person name="Barlow K.F."/>
            <person name="Bates K."/>
            <person name="Beasley H."/>
            <person name="Beasley O."/>
            <person name="Bird C.P."/>
            <person name="Bray-Allen S."/>
            <person name="Brown A.J."/>
            <person name="Brown J.Y."/>
            <person name="Burford D."/>
            <person name="Burrill W."/>
            <person name="Burton J."/>
            <person name="Carder C."/>
            <person name="Carter N.P."/>
            <person name="Chapman J.C."/>
            <person name="Chen Y."/>
            <person name="Clarke G."/>
            <person name="Clark S.Y."/>
            <person name="Clee C.M."/>
            <person name="Clegg S."/>
            <person name="Collier R.E."/>
            <person name="Corby N."/>
            <person name="Crosier M."/>
            <person name="Cummings A.T."/>
            <person name="Davies J."/>
            <person name="Dhami P."/>
            <person name="Dunn M."/>
            <person name="Dutta I."/>
            <person name="Dyer L.W."/>
            <person name="Earthrowl M.E."/>
            <person name="Faulkner L."/>
            <person name="Fleming C.J."/>
            <person name="Frankish A."/>
            <person name="Frankland J.A."/>
            <person name="French L."/>
            <person name="Fricker D.G."/>
            <person name="Garner P."/>
            <person name="Garnett J."/>
            <person name="Ghori J."/>
            <person name="Gilbert J.G.R."/>
            <person name="Glison C."/>
            <person name="Grafham D.V."/>
            <person name="Gribble S."/>
            <person name="Griffiths C."/>
            <person name="Griffiths-Jones S."/>
            <person name="Grocock R."/>
            <person name="Guy J."/>
            <person name="Hall R.E."/>
            <person name="Hammond S."/>
            <person name="Harley J.L."/>
            <person name="Harrison E.S.I."/>
            <person name="Hart E.A."/>
            <person name="Heath P.D."/>
            <person name="Henderson C.D."/>
            <person name="Hopkins B.L."/>
            <person name="Howard P.J."/>
            <person name="Howden P.J."/>
            <person name="Huckle E."/>
            <person name="Johnson C."/>
            <person name="Johnson D."/>
            <person name="Joy A.A."/>
            <person name="Kay M."/>
            <person name="Keenan S."/>
            <person name="Kershaw J.K."/>
            <person name="Kimberley A.M."/>
            <person name="King A."/>
            <person name="Knights A."/>
            <person name="Laird G.K."/>
            <person name="Langford C."/>
            <person name="Lawlor S."/>
            <person name="Leongamornlert D.A."/>
            <person name="Leversha M."/>
            <person name="Lloyd C."/>
            <person name="Lloyd D.M."/>
            <person name="Lovell J."/>
            <person name="Martin S."/>
            <person name="Mashreghi-Mohammadi M."/>
            <person name="Matthews L."/>
            <person name="McLaren S."/>
            <person name="McLay K.E."/>
            <person name="McMurray A."/>
            <person name="Milne S."/>
            <person name="Nickerson T."/>
            <person name="Nisbett J."/>
            <person name="Nordsiek G."/>
            <person name="Pearce A.V."/>
            <person name="Peck A.I."/>
            <person name="Porter K.M."/>
            <person name="Pandian R."/>
            <person name="Pelan S."/>
            <person name="Phillimore B."/>
            <person name="Povey S."/>
            <person name="Ramsey Y."/>
            <person name="Rand V."/>
            <person name="Scharfe M."/>
            <person name="Sehra H.K."/>
            <person name="Shownkeen R."/>
            <person name="Sims S.K."/>
            <person name="Skuce C.D."/>
            <person name="Smith M."/>
            <person name="Steward C.A."/>
            <person name="Swarbreck D."/>
            <person name="Sycamore N."/>
            <person name="Tester J."/>
            <person name="Thorpe A."/>
            <person name="Tracey A."/>
            <person name="Tromans A."/>
            <person name="Thomas D.W."/>
            <person name="Wall M."/>
            <person name="Wallis J.M."/>
            <person name="West A.P."/>
            <person name="Whitehead S.L."/>
            <person name="Willey D.L."/>
            <person name="Williams S.A."/>
            <person name="Wilming L."/>
            <person name="Wray P.W."/>
            <person name="Young L."/>
            <person name="Ashurst J.L."/>
            <person name="Coulson A."/>
            <person name="Blocker H."/>
            <person name="Durbin R.M."/>
            <person name="Sulston J.E."/>
            <person name="Hubbard T."/>
            <person name="Jackson M.J."/>
            <person name="Bentley D.R."/>
            <person name="Beck S."/>
            <person name="Rogers J."/>
            <person name="Dunham I."/>
        </authorList>
    </citation>
    <scope>NUCLEOTIDE SEQUENCE [LARGE SCALE GENOMIC DNA]</scope>
</reference>
<dbReference type="EC" id="2.4.1.-"/>
<dbReference type="EMBL" id="AL161911">
    <property type="status" value="NOT_ANNOTATED_CDS"/>
    <property type="molecule type" value="Genomic_DNA"/>
</dbReference>
<dbReference type="CCDS" id="CCDS94472.1"/>
<dbReference type="RefSeq" id="NP_001373752.1">
    <property type="nucleotide sequence ID" value="NM_001386823.1"/>
</dbReference>
<dbReference type="SMR" id="A8MXE2"/>
<dbReference type="FunCoup" id="A8MXE2">
    <property type="interactions" value="113"/>
</dbReference>
<dbReference type="STRING" id="9606.ENSP00000491256"/>
<dbReference type="GlyCosmos" id="A8MXE2">
    <property type="glycosylation" value="3 sites, No reported glycans"/>
</dbReference>
<dbReference type="GlyGen" id="A8MXE2">
    <property type="glycosylation" value="3 sites"/>
</dbReference>
<dbReference type="iPTMnet" id="A8MXE2"/>
<dbReference type="BioMuta" id="-"/>
<dbReference type="MassIVE" id="A8MXE2"/>
<dbReference type="PeptideAtlas" id="A8MXE2"/>
<dbReference type="Ensembl" id="ENST00000464488.3">
    <property type="protein sequence ID" value="ENSP00000491256.1"/>
    <property type="gene ID" value="ENSG00000214654.9"/>
</dbReference>
<dbReference type="Ensembl" id="ENST00000689072.1">
    <property type="protein sequence ID" value="ENSP00000508889.1"/>
    <property type="gene ID" value="ENSG00000214654.9"/>
</dbReference>
<dbReference type="GeneID" id="100288842"/>
<dbReference type="MANE-Select" id="ENST00000689072.1">
    <property type="protein sequence ID" value="ENSP00000508889.1"/>
    <property type="RefSeq nucleotide sequence ID" value="NM_001386823.1"/>
    <property type="RefSeq protein sequence ID" value="NP_001373752.1"/>
</dbReference>
<dbReference type="AGR" id="HGNC:53652"/>
<dbReference type="GeneCards" id="B3GALT9"/>
<dbReference type="HGNC" id="HGNC:53652">
    <property type="gene designation" value="B3GALT9"/>
</dbReference>
<dbReference type="HPA" id="ENSG00000214654">
    <property type="expression patterns" value="Low tissue specificity"/>
</dbReference>
<dbReference type="MIM" id="620239">
    <property type="type" value="gene"/>
</dbReference>
<dbReference type="neXtProt" id="NX_A8MXE2"/>
<dbReference type="OpenTargets" id="ENSG00000214654"/>
<dbReference type="VEuPathDB" id="HostDB:ENSG00000214654"/>
<dbReference type="GeneTree" id="ENSGT00940000162230"/>
<dbReference type="InParanoid" id="A8MXE2"/>
<dbReference type="OMA" id="VFKEVPM"/>
<dbReference type="OrthoDB" id="115198at2759"/>
<dbReference type="PAN-GO" id="A8MXE2">
    <property type="GO annotations" value="2 GO annotations based on evolutionary models"/>
</dbReference>
<dbReference type="PhylomeDB" id="A8MXE2"/>
<dbReference type="Pharos" id="A8MXE2">
    <property type="development level" value="Tdark"/>
</dbReference>
<dbReference type="PRO" id="PR:A8MXE2"/>
<dbReference type="Proteomes" id="UP000005640">
    <property type="component" value="Chromosome 9"/>
</dbReference>
<dbReference type="RNAct" id="A8MXE2">
    <property type="molecule type" value="protein"/>
</dbReference>
<dbReference type="Bgee" id="ENSG00000214654">
    <property type="expression patterns" value="Expressed in male germ line stem cell (sensu Vertebrata) in testis and 107 other cell types or tissues"/>
</dbReference>
<dbReference type="ExpressionAtlas" id="A8MXE2">
    <property type="expression patterns" value="baseline and differential"/>
</dbReference>
<dbReference type="GO" id="GO:0000139">
    <property type="term" value="C:Golgi membrane"/>
    <property type="evidence" value="ECO:0000318"/>
    <property type="project" value="GO_Central"/>
</dbReference>
<dbReference type="GO" id="GO:0016757">
    <property type="term" value="F:glycosyltransferase activity"/>
    <property type="evidence" value="ECO:0000318"/>
    <property type="project" value="GO_Central"/>
</dbReference>
<dbReference type="GO" id="GO:0016758">
    <property type="term" value="F:hexosyltransferase activity"/>
    <property type="evidence" value="ECO:0007669"/>
    <property type="project" value="InterPro"/>
</dbReference>
<dbReference type="GO" id="GO:0006493">
    <property type="term" value="P:protein O-linked glycosylation"/>
    <property type="evidence" value="ECO:0000318"/>
    <property type="project" value="GO_Central"/>
</dbReference>
<dbReference type="FunFam" id="3.90.550.50:FF:000025">
    <property type="entry name" value="Hexosyltransferase"/>
    <property type="match status" value="1"/>
</dbReference>
<dbReference type="Gene3D" id="3.90.550.50">
    <property type="match status" value="1"/>
</dbReference>
<dbReference type="InterPro" id="IPR002659">
    <property type="entry name" value="Glyco_trans_31"/>
</dbReference>
<dbReference type="PANTHER" id="PTHR11214:SF29">
    <property type="entry name" value="BETA-1,3-GALACTOSYLTRANSFERASE 9"/>
    <property type="match status" value="1"/>
</dbReference>
<dbReference type="PANTHER" id="PTHR11214">
    <property type="entry name" value="BETA-1,3-N-ACETYLGLUCOSAMINYLTRANSFERASE"/>
    <property type="match status" value="1"/>
</dbReference>
<dbReference type="Pfam" id="PF01762">
    <property type="entry name" value="Galactosyl_T"/>
    <property type="match status" value="1"/>
</dbReference>
<feature type="chain" id="PRO_0000346424" description="Beta-1,3-galactosyltransferase 9">
    <location>
        <begin position="1"/>
        <end position="369"/>
    </location>
</feature>
<feature type="topological domain" description="Cytoplasmic" evidence="2">
    <location>
        <begin position="1"/>
        <end position="12"/>
    </location>
</feature>
<feature type="transmembrane region" description="Helical; Signal-anchor for type II membrane protein" evidence="2">
    <location>
        <begin position="13"/>
        <end position="33"/>
    </location>
</feature>
<feature type="topological domain" description="Lumenal" evidence="2">
    <location>
        <begin position="34"/>
        <end position="369"/>
    </location>
</feature>
<feature type="glycosylation site" description="N-linked (GlcNAc...) asparagine" evidence="2">
    <location>
        <position position="66"/>
    </location>
</feature>
<feature type="glycosylation site" description="N-linked (GlcNAc...) asparagine" evidence="2">
    <location>
        <position position="96"/>
    </location>
</feature>
<feature type="glycosylation site" description="N-linked (GlcNAc...) asparagine" evidence="2">
    <location>
        <position position="109"/>
    </location>
</feature>
<gene>
    <name evidence="4" type="primary">B3GALT9</name>
    <name type="synonym">B3GNT10</name>
</gene>
<accession>A8MXE2</accession>
<organism>
    <name type="scientific">Homo sapiens</name>
    <name type="common">Human</name>
    <dbReference type="NCBI Taxonomy" id="9606"/>
    <lineage>
        <taxon>Eukaryota</taxon>
        <taxon>Metazoa</taxon>
        <taxon>Chordata</taxon>
        <taxon>Craniata</taxon>
        <taxon>Vertebrata</taxon>
        <taxon>Euteleostomi</taxon>
        <taxon>Mammalia</taxon>
        <taxon>Eutheria</taxon>
        <taxon>Euarchontoglires</taxon>
        <taxon>Primates</taxon>
        <taxon>Haplorrhini</taxon>
        <taxon>Catarrhini</taxon>
        <taxon>Hominidae</taxon>
        <taxon>Homo</taxon>
    </lineage>
</organism>
<name>B3GT9_HUMAN</name>
<evidence type="ECO:0000250" key="1"/>
<evidence type="ECO:0000255" key="2"/>
<evidence type="ECO:0000305" key="3"/>
<evidence type="ECO:0000312" key="4">
    <source>
        <dbReference type="HGNC" id="HGNC:53652"/>
    </source>
</evidence>
<keyword id="KW-0325">Glycoprotein</keyword>
<keyword id="KW-0328">Glycosyltransferase</keyword>
<keyword id="KW-0333">Golgi apparatus</keyword>
<keyword id="KW-0472">Membrane</keyword>
<keyword id="KW-1267">Proteomics identification</keyword>
<keyword id="KW-1185">Reference proteome</keyword>
<keyword id="KW-0735">Signal-anchor</keyword>
<keyword id="KW-0808">Transferase</keyword>
<keyword id="KW-0812">Transmembrane</keyword>
<keyword id="KW-1133">Transmembrane helix</keyword>
<proteinExistence type="evidence at protein level"/>
<protein>
    <recommendedName>
        <fullName>Beta-1,3-galactosyltransferase 9</fullName>
        <ecNumber>2.4.1.-</ecNumber>
    </recommendedName>
    <alternativeName>
        <fullName>UDP-GlcNAc:betaGal beta-1,3-N-acetylglucosaminyltransferase 10</fullName>
    </alternativeName>
</protein>
<comment type="function">
    <text evidence="3">Putative glycosyltransferase that could catalyze the transfer of galactose residues from UDP-alpha-D-galactose.</text>
</comment>
<comment type="subcellular location">
    <subcellularLocation>
        <location evidence="1">Golgi apparatus membrane</location>
        <topology evidence="1">Single-pass type II membrane protein</topology>
    </subcellularLocation>
</comment>
<comment type="similarity">
    <text evidence="3">Belongs to the glycosyltransferase 31 family.</text>
</comment>